<feature type="signal peptide" evidence="6">
    <location>
        <begin position="1"/>
        <end position="20"/>
    </location>
</feature>
<feature type="chain" id="PRO_0000260763" description="Cholecystokinin">
    <location>
        <begin position="21"/>
        <end position="115"/>
    </location>
</feature>
<feature type="propeptide" id="PRO_0000260764" evidence="5">
    <location>
        <begin position="21"/>
        <end position="44"/>
    </location>
</feature>
<feature type="peptide" id="PRO_0000010531" description="Cholecystokinin-58" evidence="5">
    <location>
        <begin position="46"/>
        <end position="103"/>
    </location>
</feature>
<feature type="peptide" id="PRO_0000306289" description="Cholecystokinin-58 desnonopeptide" evidence="5">
    <location>
        <begin position="46"/>
        <end position="94"/>
    </location>
</feature>
<feature type="peptide" id="PRO_0000010532" description="Cholecystokinin-39" evidence="5">
    <location>
        <begin position="65"/>
        <end position="103"/>
    </location>
</feature>
<feature type="peptide" id="PRO_0000010533" description="Cholecystokinin-33" evidence="5">
    <location>
        <begin position="71"/>
        <end position="103"/>
    </location>
</feature>
<feature type="peptide" id="PRO_0000306290" description="Cholecystokinin-25" evidence="5">
    <location>
        <begin position="79"/>
        <end position="103"/>
    </location>
</feature>
<feature type="peptide" id="PRO_0000306291" description="Cholecystokinin-18" evidence="5">
    <location>
        <begin position="86"/>
        <end position="103"/>
    </location>
</feature>
<feature type="peptide" id="PRO_0000010534" description="Cholecystokinin-12" evidence="2">
    <location>
        <begin position="92"/>
        <end position="103"/>
    </location>
</feature>
<feature type="peptide" id="PRO_0000010535" description="Cholecystokinin-8" evidence="5">
    <location>
        <begin position="96"/>
        <end position="103"/>
    </location>
</feature>
<feature type="peptide" id="PRO_0000306292" description="Cholecystokinin-7" evidence="5">
    <location>
        <begin position="97"/>
        <end position="103"/>
    </location>
</feature>
<feature type="peptide" id="PRO_0000306293" description="Cholecystokinin-5" evidence="5">
    <location>
        <begin position="99"/>
        <end position="103"/>
    </location>
</feature>
<feature type="propeptide" id="PRO_0000260765">
    <location>
        <begin position="107"/>
        <end position="115"/>
    </location>
</feature>
<feature type="region of interest" description="Disordered" evidence="7">
    <location>
        <begin position="21"/>
        <end position="44"/>
    </location>
</feature>
<feature type="modified residue" description="Sulfotyrosine" evidence="8">
    <location>
        <position position="97"/>
    </location>
</feature>
<feature type="modified residue" description="Phenylalanine amide" evidence="8">
    <location>
        <position position="103"/>
    </location>
</feature>
<feature type="modified residue" description="Sulfotyrosine" evidence="1">
    <location>
        <position position="113"/>
    </location>
</feature>
<name>CCKN_BOVIN</name>
<reference key="1">
    <citation type="submission" date="2006-02" db="EMBL/GenBank/DDBJ databases">
        <authorList>
            <consortium name="NIH - Mammalian Gene Collection (MGC) project"/>
        </authorList>
    </citation>
    <scope>NUCLEOTIDE SEQUENCE [LARGE SCALE MRNA]</scope>
    <source>
        <strain>Hereford</strain>
        <tissue>Hypothalamus</tissue>
    </source>
</reference>
<reference key="2">
    <citation type="journal article" date="1990" name="Regul. Pept.">
        <title>Purification of bovine cholecystokinin-58 and sequencing of its N-terminus.</title>
        <authorList>
            <person name="Eng J."/>
            <person name="Li H.R."/>
            <person name="Yalow R.S."/>
        </authorList>
    </citation>
    <scope>PROTEIN SEQUENCE OF 46-74</scope>
    <source>
        <tissue>Brain</tissue>
    </source>
</reference>
<reference key="3">
    <citation type="journal article" date="1985" name="Regul. Pept.">
        <title>Characterization of two novel forms of cholecystokinin isolated from bovine upper intestine.</title>
        <authorList>
            <person name="Carlquist M."/>
            <person name="Mutt V."/>
            <person name="Joernvall H."/>
        </authorList>
    </citation>
    <scope>PROTEIN SEQUENCE OF 65-103</scope>
    <scope>SULFATION AT TYR-97</scope>
    <scope>AMIDATION AT PHE-103</scope>
    <source>
        <tissue>Intestine</tissue>
    </source>
</reference>
<comment type="function">
    <text evidence="5">This peptide hormone induces gall bladder contraction and the release of pancreatic enzymes in the gut. Its function in the brain is not clear. Binding to CCK-A receptors stimulates amylase release from the pancreas, binding to CCK-B receptors stimulates gastric acid secretion.</text>
</comment>
<comment type="subunit">
    <text evidence="5">Binds to CCK-A receptors in the pancreas and CCK-B receptors in the brain.</text>
</comment>
<comment type="subcellular location">
    <subcellularLocation>
        <location evidence="4">Secreted</location>
    </subcellularLocation>
</comment>
<comment type="PTM">
    <text>The precursor is cleaved by proteases to produce a number of active cholecystokinins.</text>
</comment>
<comment type="PTM">
    <molecule>Cholecystokinin-5</molecule>
    <text evidence="3">The precursor is cleaved by ACE, which removes the Gly-Arg-Arg peptide at the C-terminus, leading to mature hormone.</text>
</comment>
<comment type="similarity">
    <text evidence="9">Belongs to the gastrin/cholecystokinin family.</text>
</comment>
<sequence length="115" mass="12835">MNRGVCLCLLMAVLAAGALAQPMPHADPTGPRAQQAEEAPRRQLRAVPRVDDEPRAQLGALLARYIQQARKAPSGRMSVIKNLQSLDPSHRISDRDYMGWMDFGRRSAEEFEYTS</sequence>
<gene>
    <name type="primary">CCK</name>
</gene>
<organism>
    <name type="scientific">Bos taurus</name>
    <name type="common">Bovine</name>
    <dbReference type="NCBI Taxonomy" id="9913"/>
    <lineage>
        <taxon>Eukaryota</taxon>
        <taxon>Metazoa</taxon>
        <taxon>Chordata</taxon>
        <taxon>Craniata</taxon>
        <taxon>Vertebrata</taxon>
        <taxon>Euteleostomi</taxon>
        <taxon>Mammalia</taxon>
        <taxon>Eutheria</taxon>
        <taxon>Laurasiatheria</taxon>
        <taxon>Artiodactyla</taxon>
        <taxon>Ruminantia</taxon>
        <taxon>Pecora</taxon>
        <taxon>Bovidae</taxon>
        <taxon>Bovinae</taxon>
        <taxon>Bos</taxon>
    </lineage>
</organism>
<evidence type="ECO:0000250" key="1"/>
<evidence type="ECO:0000250" key="2">
    <source>
        <dbReference type="UniProtKB" id="P01356"/>
    </source>
</evidence>
<evidence type="ECO:0000250" key="3">
    <source>
        <dbReference type="UniProtKB" id="P06307"/>
    </source>
</evidence>
<evidence type="ECO:0000250" key="4">
    <source>
        <dbReference type="UniProtKB" id="P09240"/>
    </source>
</evidence>
<evidence type="ECO:0000250" key="5">
    <source>
        <dbReference type="UniProtKB" id="Q9TS44"/>
    </source>
</evidence>
<evidence type="ECO:0000255" key="6"/>
<evidence type="ECO:0000256" key="7">
    <source>
        <dbReference type="SAM" id="MobiDB-lite"/>
    </source>
</evidence>
<evidence type="ECO:0000269" key="8">
    <source>
    </source>
</evidence>
<evidence type="ECO:0000305" key="9"/>
<accession>P41520</accession>
<accession>Q29RG8</accession>
<proteinExistence type="evidence at protein level"/>
<keyword id="KW-0027">Amidation</keyword>
<keyword id="KW-0165">Cleavage on pair of basic residues</keyword>
<keyword id="KW-0903">Direct protein sequencing</keyword>
<keyword id="KW-0372">Hormone</keyword>
<keyword id="KW-1185">Reference proteome</keyword>
<keyword id="KW-0964">Secreted</keyword>
<keyword id="KW-0732">Signal</keyword>
<keyword id="KW-0765">Sulfation</keyword>
<dbReference type="EMBL" id="BC114184">
    <property type="protein sequence ID" value="AAI14185.1"/>
    <property type="molecule type" value="mRNA"/>
</dbReference>
<dbReference type="PIR" id="A60315">
    <property type="entry name" value="A60315"/>
</dbReference>
<dbReference type="PIR" id="A60326">
    <property type="entry name" value="A60326"/>
</dbReference>
<dbReference type="RefSeq" id="NP_001040068.1">
    <property type="nucleotide sequence ID" value="NM_001046603.2"/>
</dbReference>
<dbReference type="RefSeq" id="XP_005222606.2">
    <property type="nucleotide sequence ID" value="XM_005222549.5"/>
</dbReference>
<dbReference type="RefSeq" id="XP_005222607.2">
    <property type="nucleotide sequence ID" value="XM_005222550.5"/>
</dbReference>
<dbReference type="FunCoup" id="P41520">
    <property type="interactions" value="354"/>
</dbReference>
<dbReference type="STRING" id="9913.ENSBTAP00000062442"/>
<dbReference type="PaxDb" id="9913-ENSBTAP00000017320"/>
<dbReference type="Ensembl" id="ENSBTAT00000098888.1">
    <property type="protein sequence ID" value="ENSBTAP00000102477.1"/>
    <property type="gene ID" value="ENSBTAG00000056680.1"/>
</dbReference>
<dbReference type="GeneID" id="617510"/>
<dbReference type="KEGG" id="bta:617510"/>
<dbReference type="CTD" id="885"/>
<dbReference type="VEuPathDB" id="HostDB:ENSBTAG00000013027"/>
<dbReference type="eggNOG" id="ENOG502S472">
    <property type="taxonomic scope" value="Eukaryota"/>
</dbReference>
<dbReference type="GeneTree" id="ENSGT00390000003571"/>
<dbReference type="InParanoid" id="P41520"/>
<dbReference type="OMA" id="NTNPYMG"/>
<dbReference type="OrthoDB" id="9862982at2759"/>
<dbReference type="Reactome" id="R-BTA-375276">
    <property type="pathway name" value="Peptide ligand-binding receptors"/>
</dbReference>
<dbReference type="Reactome" id="R-BTA-416476">
    <property type="pathway name" value="G alpha (q) signalling events"/>
</dbReference>
<dbReference type="Proteomes" id="UP000009136">
    <property type="component" value="Chromosome 22"/>
</dbReference>
<dbReference type="Bgee" id="ENSBTAG00000013027">
    <property type="expression patterns" value="Expressed in occipital lobe and 41 other cell types or tissues"/>
</dbReference>
<dbReference type="GO" id="GO:0030424">
    <property type="term" value="C:axon"/>
    <property type="evidence" value="ECO:0000250"/>
    <property type="project" value="UniProtKB"/>
</dbReference>
<dbReference type="GO" id="GO:0005615">
    <property type="term" value="C:extracellular space"/>
    <property type="evidence" value="ECO:0000314"/>
    <property type="project" value="AgBase"/>
</dbReference>
<dbReference type="GO" id="GO:0005184">
    <property type="term" value="F:neuropeptide hormone activity"/>
    <property type="evidence" value="ECO:0000250"/>
    <property type="project" value="UniProtKB"/>
</dbReference>
<dbReference type="GO" id="GO:0007409">
    <property type="term" value="P:axonogenesis"/>
    <property type="evidence" value="ECO:0000250"/>
    <property type="project" value="UniProtKB"/>
</dbReference>
<dbReference type="GO" id="GO:0007586">
    <property type="term" value="P:digestion"/>
    <property type="evidence" value="ECO:0000318"/>
    <property type="project" value="GO_Central"/>
</dbReference>
<dbReference type="GO" id="GO:0042755">
    <property type="term" value="P:eating behavior"/>
    <property type="evidence" value="ECO:0000250"/>
    <property type="project" value="UniProtKB"/>
</dbReference>
<dbReference type="GO" id="GO:0001764">
    <property type="term" value="P:neuron migration"/>
    <property type="evidence" value="ECO:0000250"/>
    <property type="project" value="UniProtKB"/>
</dbReference>
<dbReference type="GO" id="GO:0032094">
    <property type="term" value="P:response to food"/>
    <property type="evidence" value="ECO:0000314"/>
    <property type="project" value="AgBase"/>
</dbReference>
<dbReference type="InterPro" id="IPR015499">
    <property type="entry name" value="CCK-like"/>
</dbReference>
<dbReference type="InterPro" id="IPR001651">
    <property type="entry name" value="Gastrin/CCK"/>
</dbReference>
<dbReference type="InterPro" id="IPR013152">
    <property type="entry name" value="Gastrin/cholecystokinin_CS"/>
</dbReference>
<dbReference type="PANTHER" id="PTHR10786">
    <property type="entry name" value="CHOLECYSTOKININ"/>
    <property type="match status" value="1"/>
</dbReference>
<dbReference type="PANTHER" id="PTHR10786:SF0">
    <property type="entry name" value="CHOLECYSTOKININ"/>
    <property type="match status" value="1"/>
</dbReference>
<dbReference type="Pfam" id="PF00918">
    <property type="entry name" value="Gastrin"/>
    <property type="match status" value="1"/>
</dbReference>
<dbReference type="PROSITE" id="PS00259">
    <property type="entry name" value="GASTRIN"/>
    <property type="match status" value="1"/>
</dbReference>
<protein>
    <recommendedName>
        <fullName>Cholecystokinin</fullName>
        <shortName>CCK</shortName>
    </recommendedName>
    <component>
        <recommendedName>
            <fullName>Cholecystokinin-58</fullName>
            <shortName>CCK58</shortName>
        </recommendedName>
    </component>
    <component>
        <recommendedName>
            <fullName>Cholecystokinin-58 desnonopeptide</fullName>
        </recommendedName>
        <alternativeName>
            <fullName>(1-49)-CCK58</fullName>
        </alternativeName>
    </component>
    <component>
        <recommendedName>
            <fullName>Cholecystokinin-39</fullName>
            <shortName>CCK39</shortName>
        </recommendedName>
    </component>
    <component>
        <recommendedName>
            <fullName>Cholecystokinin-33</fullName>
            <shortName>CCK33</shortName>
        </recommendedName>
    </component>
    <component>
        <recommendedName>
            <fullName>Cholecystokinin-25</fullName>
            <shortName>CCK25</shortName>
        </recommendedName>
    </component>
    <component>
        <recommendedName>
            <fullName>Cholecystokinin-18</fullName>
            <shortName>CCK18</shortName>
        </recommendedName>
    </component>
    <component>
        <recommendedName>
            <fullName>Cholecystokinin-12</fullName>
            <shortName>CCK12</shortName>
        </recommendedName>
    </component>
    <component>
        <recommendedName>
            <fullName>Cholecystokinin-8</fullName>
            <shortName>CCK8</shortName>
        </recommendedName>
    </component>
    <component>
        <recommendedName>
            <fullName>Cholecystokinin-7</fullName>
            <shortName>CCK7</shortName>
        </recommendedName>
    </component>
    <component>
        <recommendedName>
            <fullName>Cholecystokinin-5</fullName>
            <shortName>CCK5</shortName>
        </recommendedName>
    </component>
</protein>